<evidence type="ECO:0000255" key="1">
    <source>
        <dbReference type="HAMAP-Rule" id="MF_00204"/>
    </source>
</evidence>
<protein>
    <recommendedName>
        <fullName evidence="1">UvrABC system protein B</fullName>
        <shortName evidence="1">Protein UvrB</shortName>
    </recommendedName>
    <alternativeName>
        <fullName evidence="1">Excinuclease ABC subunit B</fullName>
    </alternativeName>
</protein>
<sequence>MIDKRDFKAFKLVSKYDPSGDQPQAIEALVDNIEGGEKAQILLGATGTGKTYTMSQVISKVNKPTLVIAHNKTLAGQLYGEFKEFFPENAVEYFVSYYDYYQPEAYVPSSDTYIEKDSSVNDEIDKLRHSATSSLLERNDVIVVASVSCIYGLGSPKEYADSAVSLRPGQEISRDQLLNALVDIQFERNDIDFQRGRFRVRGDVVEVFPASRDEHAFRIEFFGDEIDRIREIESLTGKVLGDADHLVLFPATHFVTNDEHMEQSISKIQAELADQLKLFEAEGKLLEAQRLRQRTEYDIEMLREMGYTNGVENYSRHMDGRSAGEPPYTLLDFFPEDFLIMIDESHMTMGQIKGMYNGDKARKQMLVDYGFRLPSALDNRPLRREEFESHVHQIVYVSATPGDYEMEQTDTIVEQIIRPTGLLDPEVEVRPSMGQMDDLLGEINLRIERGERTFITTLTKKMAEDLTDYLKEMGVKVKYMHSDIKTLERTEIIRDLRLGVFDVLIGINLLREGIDVPEVSLVAILDADKEGFLRNERGLIQTIGRAARNADGHVIMYADRMTDSMQRAIDETARRRAIQMAYNEEHGIIPQTIKKDIRDLISISRAVEAKATEAETNYESMTRSERQEAIKQLQKNMQEAAELLDFELAAQLRDLILELKAMD</sequence>
<accession>C0MDC6</accession>
<dbReference type="EMBL" id="FM204884">
    <property type="protein sequence ID" value="CAW98790.1"/>
    <property type="molecule type" value="Genomic_DNA"/>
</dbReference>
<dbReference type="SMR" id="C0MDC6"/>
<dbReference type="KEGG" id="seq:SZO_06930"/>
<dbReference type="PATRIC" id="fig|40041.11.peg.738"/>
<dbReference type="eggNOG" id="COG0556">
    <property type="taxonomic scope" value="Bacteria"/>
</dbReference>
<dbReference type="HOGENOM" id="CLU_009621_2_1_9"/>
<dbReference type="Proteomes" id="UP000001368">
    <property type="component" value="Chromosome"/>
</dbReference>
<dbReference type="GO" id="GO:0005737">
    <property type="term" value="C:cytoplasm"/>
    <property type="evidence" value="ECO:0007669"/>
    <property type="project" value="UniProtKB-SubCell"/>
</dbReference>
<dbReference type="GO" id="GO:0009380">
    <property type="term" value="C:excinuclease repair complex"/>
    <property type="evidence" value="ECO:0007669"/>
    <property type="project" value="InterPro"/>
</dbReference>
<dbReference type="GO" id="GO:0005524">
    <property type="term" value="F:ATP binding"/>
    <property type="evidence" value="ECO:0007669"/>
    <property type="project" value="UniProtKB-UniRule"/>
</dbReference>
<dbReference type="GO" id="GO:0016887">
    <property type="term" value="F:ATP hydrolysis activity"/>
    <property type="evidence" value="ECO:0007669"/>
    <property type="project" value="InterPro"/>
</dbReference>
<dbReference type="GO" id="GO:0003677">
    <property type="term" value="F:DNA binding"/>
    <property type="evidence" value="ECO:0007669"/>
    <property type="project" value="UniProtKB-UniRule"/>
</dbReference>
<dbReference type="GO" id="GO:0009381">
    <property type="term" value="F:excinuclease ABC activity"/>
    <property type="evidence" value="ECO:0007669"/>
    <property type="project" value="UniProtKB-UniRule"/>
</dbReference>
<dbReference type="GO" id="GO:0004386">
    <property type="term" value="F:helicase activity"/>
    <property type="evidence" value="ECO:0007669"/>
    <property type="project" value="UniProtKB-KW"/>
</dbReference>
<dbReference type="GO" id="GO:0006289">
    <property type="term" value="P:nucleotide-excision repair"/>
    <property type="evidence" value="ECO:0007669"/>
    <property type="project" value="UniProtKB-UniRule"/>
</dbReference>
<dbReference type="GO" id="GO:0009432">
    <property type="term" value="P:SOS response"/>
    <property type="evidence" value="ECO:0007669"/>
    <property type="project" value="UniProtKB-UniRule"/>
</dbReference>
<dbReference type="CDD" id="cd17916">
    <property type="entry name" value="DEXHc_UvrB"/>
    <property type="match status" value="1"/>
</dbReference>
<dbReference type="CDD" id="cd18790">
    <property type="entry name" value="SF2_C_UvrB"/>
    <property type="match status" value="1"/>
</dbReference>
<dbReference type="Gene3D" id="3.40.50.300">
    <property type="entry name" value="P-loop containing nucleotide triphosphate hydrolases"/>
    <property type="match status" value="3"/>
</dbReference>
<dbReference type="Gene3D" id="4.10.860.10">
    <property type="entry name" value="UVR domain"/>
    <property type="match status" value="1"/>
</dbReference>
<dbReference type="HAMAP" id="MF_00204">
    <property type="entry name" value="UvrB"/>
    <property type="match status" value="1"/>
</dbReference>
<dbReference type="InterPro" id="IPR006935">
    <property type="entry name" value="Helicase/UvrB_N"/>
</dbReference>
<dbReference type="InterPro" id="IPR014001">
    <property type="entry name" value="Helicase_ATP-bd"/>
</dbReference>
<dbReference type="InterPro" id="IPR001650">
    <property type="entry name" value="Helicase_C-like"/>
</dbReference>
<dbReference type="InterPro" id="IPR027417">
    <property type="entry name" value="P-loop_NTPase"/>
</dbReference>
<dbReference type="InterPro" id="IPR001943">
    <property type="entry name" value="UVR_dom"/>
</dbReference>
<dbReference type="InterPro" id="IPR036876">
    <property type="entry name" value="UVR_dom_sf"/>
</dbReference>
<dbReference type="InterPro" id="IPR004807">
    <property type="entry name" value="UvrB"/>
</dbReference>
<dbReference type="InterPro" id="IPR041471">
    <property type="entry name" value="UvrB_inter"/>
</dbReference>
<dbReference type="InterPro" id="IPR024759">
    <property type="entry name" value="UvrB_YAD/RRR_dom"/>
</dbReference>
<dbReference type="NCBIfam" id="NF003673">
    <property type="entry name" value="PRK05298.1"/>
    <property type="match status" value="1"/>
</dbReference>
<dbReference type="NCBIfam" id="TIGR00631">
    <property type="entry name" value="uvrb"/>
    <property type="match status" value="1"/>
</dbReference>
<dbReference type="PANTHER" id="PTHR24029">
    <property type="entry name" value="UVRABC SYSTEM PROTEIN B"/>
    <property type="match status" value="1"/>
</dbReference>
<dbReference type="PANTHER" id="PTHR24029:SF0">
    <property type="entry name" value="UVRABC SYSTEM PROTEIN B"/>
    <property type="match status" value="1"/>
</dbReference>
<dbReference type="Pfam" id="PF00271">
    <property type="entry name" value="Helicase_C"/>
    <property type="match status" value="1"/>
</dbReference>
<dbReference type="Pfam" id="PF04851">
    <property type="entry name" value="ResIII"/>
    <property type="match status" value="1"/>
</dbReference>
<dbReference type="Pfam" id="PF02151">
    <property type="entry name" value="UVR"/>
    <property type="match status" value="1"/>
</dbReference>
<dbReference type="Pfam" id="PF12344">
    <property type="entry name" value="UvrB"/>
    <property type="match status" value="1"/>
</dbReference>
<dbReference type="Pfam" id="PF17757">
    <property type="entry name" value="UvrB_inter"/>
    <property type="match status" value="1"/>
</dbReference>
<dbReference type="SMART" id="SM00487">
    <property type="entry name" value="DEXDc"/>
    <property type="match status" value="1"/>
</dbReference>
<dbReference type="SMART" id="SM00490">
    <property type="entry name" value="HELICc"/>
    <property type="match status" value="1"/>
</dbReference>
<dbReference type="SUPFAM" id="SSF46600">
    <property type="entry name" value="C-terminal UvrC-binding domain of UvrB"/>
    <property type="match status" value="1"/>
</dbReference>
<dbReference type="SUPFAM" id="SSF52540">
    <property type="entry name" value="P-loop containing nucleoside triphosphate hydrolases"/>
    <property type="match status" value="2"/>
</dbReference>
<dbReference type="PROSITE" id="PS51192">
    <property type="entry name" value="HELICASE_ATP_BIND_1"/>
    <property type="match status" value="1"/>
</dbReference>
<dbReference type="PROSITE" id="PS51194">
    <property type="entry name" value="HELICASE_CTER"/>
    <property type="match status" value="1"/>
</dbReference>
<dbReference type="PROSITE" id="PS50151">
    <property type="entry name" value="UVR"/>
    <property type="match status" value="1"/>
</dbReference>
<organism>
    <name type="scientific">Streptococcus equi subsp. zooepidemicus (strain H70)</name>
    <dbReference type="NCBI Taxonomy" id="553483"/>
    <lineage>
        <taxon>Bacteria</taxon>
        <taxon>Bacillati</taxon>
        <taxon>Bacillota</taxon>
        <taxon>Bacilli</taxon>
        <taxon>Lactobacillales</taxon>
        <taxon>Streptococcaceae</taxon>
        <taxon>Streptococcus</taxon>
    </lineage>
</organism>
<name>UVRB_STRS7</name>
<feature type="chain" id="PRO_1000204141" description="UvrABC system protein B">
    <location>
        <begin position="1"/>
        <end position="663"/>
    </location>
</feature>
<feature type="domain" description="Helicase ATP-binding" evidence="1">
    <location>
        <begin position="31"/>
        <end position="271"/>
    </location>
</feature>
<feature type="domain" description="Helicase C-terminal" evidence="1">
    <location>
        <begin position="435"/>
        <end position="601"/>
    </location>
</feature>
<feature type="domain" description="UVR" evidence="1">
    <location>
        <begin position="627"/>
        <end position="662"/>
    </location>
</feature>
<feature type="short sequence motif" description="Beta-hairpin">
    <location>
        <begin position="97"/>
        <end position="120"/>
    </location>
</feature>
<feature type="binding site" evidence="1">
    <location>
        <begin position="44"/>
        <end position="51"/>
    </location>
    <ligand>
        <name>ATP</name>
        <dbReference type="ChEBI" id="CHEBI:30616"/>
    </ligand>
</feature>
<proteinExistence type="inferred from homology"/>
<comment type="function">
    <text evidence="1">The UvrABC repair system catalyzes the recognition and processing of DNA lesions. A damage recognition complex composed of 2 UvrA and 2 UvrB subunits scans DNA for abnormalities. Upon binding of the UvrA(2)B(2) complex to a putative damaged site, the DNA wraps around one UvrB monomer. DNA wrap is dependent on ATP binding by UvrB and probably causes local melting of the DNA helix, facilitating insertion of UvrB beta-hairpin between the DNA strands. Then UvrB probes one DNA strand for the presence of a lesion. If a lesion is found the UvrA subunits dissociate and the UvrB-DNA preincision complex is formed. This complex is subsequently bound by UvrC and the second UvrB is released. If no lesion is found, the DNA wraps around the other UvrB subunit that will check the other stand for damage.</text>
</comment>
<comment type="subunit">
    <text evidence="1">Forms a heterotetramer with UvrA during the search for lesions. Interacts with UvrC in an incision complex.</text>
</comment>
<comment type="subcellular location">
    <subcellularLocation>
        <location evidence="1">Cytoplasm</location>
    </subcellularLocation>
</comment>
<comment type="domain">
    <text evidence="1">The beta-hairpin motif is involved in DNA binding.</text>
</comment>
<comment type="similarity">
    <text evidence="1">Belongs to the UvrB family.</text>
</comment>
<keyword id="KW-0067">ATP-binding</keyword>
<keyword id="KW-0963">Cytoplasm</keyword>
<keyword id="KW-0227">DNA damage</keyword>
<keyword id="KW-0228">DNA excision</keyword>
<keyword id="KW-0234">DNA repair</keyword>
<keyword id="KW-0267">Excision nuclease</keyword>
<keyword id="KW-0347">Helicase</keyword>
<keyword id="KW-0378">Hydrolase</keyword>
<keyword id="KW-0547">Nucleotide-binding</keyword>
<keyword id="KW-0742">SOS response</keyword>
<reference key="1">
    <citation type="journal article" date="2009" name="PLoS Pathog.">
        <title>Genomic evidence for the evolution of Streptococcus equi: host restriction, increased virulence, and genetic exchange with human pathogens.</title>
        <authorList>
            <person name="Holden M.T.G."/>
            <person name="Heather Z."/>
            <person name="Paillot R."/>
            <person name="Steward K.F."/>
            <person name="Webb K."/>
            <person name="Ainslie F."/>
            <person name="Jourdan T."/>
            <person name="Bason N.C."/>
            <person name="Holroyd N.E."/>
            <person name="Mungall K."/>
            <person name="Quail M.A."/>
            <person name="Sanders M."/>
            <person name="Simmonds M."/>
            <person name="Willey D."/>
            <person name="Brooks K."/>
            <person name="Aanensen D.M."/>
            <person name="Spratt B.G."/>
            <person name="Jolley K.A."/>
            <person name="Maiden M.C.J."/>
            <person name="Kehoe M."/>
            <person name="Chanter N."/>
            <person name="Bentley S.D."/>
            <person name="Robinson C."/>
            <person name="Maskell D.J."/>
            <person name="Parkhill J."/>
            <person name="Waller A.S."/>
        </authorList>
    </citation>
    <scope>NUCLEOTIDE SEQUENCE [LARGE SCALE GENOMIC DNA]</scope>
    <source>
        <strain>H70</strain>
    </source>
</reference>
<gene>
    <name evidence="1" type="primary">uvrB</name>
    <name type="ordered locus">SZO_06930</name>
</gene>